<organism>
    <name type="scientific">Vanderwaltozyma polyspora (strain ATCC 22028 / DSM 70294 / BCRC 21397 / CBS 2163 / NBRC 10782 / NRRL Y-8283 / UCD 57-17)</name>
    <name type="common">Kluyveromyces polysporus</name>
    <dbReference type="NCBI Taxonomy" id="436907"/>
    <lineage>
        <taxon>Eukaryota</taxon>
        <taxon>Fungi</taxon>
        <taxon>Dikarya</taxon>
        <taxon>Ascomycota</taxon>
        <taxon>Saccharomycotina</taxon>
        <taxon>Saccharomycetes</taxon>
        <taxon>Saccharomycetales</taxon>
        <taxon>Saccharomycetaceae</taxon>
        <taxon>Vanderwaltozyma</taxon>
    </lineage>
</organism>
<name>PRM1_VANPO</name>
<accession>A7TRZ7</accession>
<gene>
    <name type="primary">PRM1</name>
    <name type="ORF">Kpol_388p9</name>
</gene>
<dbReference type="EMBL" id="DS480492">
    <property type="protein sequence ID" value="EDO14965.1"/>
    <property type="molecule type" value="Genomic_DNA"/>
</dbReference>
<dbReference type="RefSeq" id="XP_001642823.1">
    <property type="nucleotide sequence ID" value="XM_001642773.1"/>
</dbReference>
<dbReference type="FunCoup" id="A7TRZ7">
    <property type="interactions" value="57"/>
</dbReference>
<dbReference type="STRING" id="436907.A7TRZ7"/>
<dbReference type="GlyCosmos" id="A7TRZ7">
    <property type="glycosylation" value="13 sites, No reported glycans"/>
</dbReference>
<dbReference type="GeneID" id="5543008"/>
<dbReference type="KEGG" id="vpo:Kpol_388p9"/>
<dbReference type="eggNOG" id="ENOG502QRP5">
    <property type="taxonomic scope" value="Eukaryota"/>
</dbReference>
<dbReference type="HOGENOM" id="CLU_010191_1_0_1"/>
<dbReference type="InParanoid" id="A7TRZ7"/>
<dbReference type="OMA" id="NVFGWVN"/>
<dbReference type="OrthoDB" id="5356111at2759"/>
<dbReference type="PhylomeDB" id="A7TRZ7"/>
<dbReference type="Proteomes" id="UP000000267">
    <property type="component" value="Unassembled WGS sequence"/>
</dbReference>
<dbReference type="GO" id="GO:0043332">
    <property type="term" value="C:mating projection tip"/>
    <property type="evidence" value="ECO:0007669"/>
    <property type="project" value="InterPro"/>
</dbReference>
<dbReference type="GO" id="GO:0005886">
    <property type="term" value="C:plasma membrane"/>
    <property type="evidence" value="ECO:0007669"/>
    <property type="project" value="UniProtKB-SubCell"/>
</dbReference>
<dbReference type="GO" id="GO:0032220">
    <property type="term" value="P:plasma membrane fusion involved in cytogamy"/>
    <property type="evidence" value="ECO:0007669"/>
    <property type="project" value="TreeGrafter"/>
</dbReference>
<dbReference type="InterPro" id="IPR026777">
    <property type="entry name" value="PRM1"/>
</dbReference>
<dbReference type="PANTHER" id="PTHR31030">
    <property type="entry name" value="PLASMA MEMBRANE FUSION PROTEIN PRM1"/>
    <property type="match status" value="1"/>
</dbReference>
<dbReference type="PANTHER" id="PTHR31030:SF1">
    <property type="entry name" value="PLASMA MEMBRANE FUSION PROTEIN PRM1"/>
    <property type="match status" value="1"/>
</dbReference>
<protein>
    <recommendedName>
        <fullName>Plasma membrane fusion protein PRM1</fullName>
    </recommendedName>
</protein>
<keyword id="KW-1003">Cell membrane</keyword>
<keyword id="KW-0184">Conjugation</keyword>
<keyword id="KW-0325">Glycoprotein</keyword>
<keyword id="KW-0472">Membrane</keyword>
<keyword id="KW-1185">Reference proteome</keyword>
<keyword id="KW-0812">Transmembrane</keyword>
<keyword id="KW-1133">Transmembrane helix</keyword>
<reference key="1">
    <citation type="journal article" date="2007" name="Proc. Natl. Acad. Sci. U.S.A.">
        <title>Independent sorting-out of thousands of duplicated gene pairs in two yeast species descended from a whole-genome duplication.</title>
        <authorList>
            <person name="Scannell D.R."/>
            <person name="Frank A.C."/>
            <person name="Conant G.C."/>
            <person name="Byrne K.P."/>
            <person name="Woolfit M."/>
            <person name="Wolfe K.H."/>
        </authorList>
    </citation>
    <scope>NUCLEOTIDE SEQUENCE [LARGE SCALE GENOMIC DNA]</scope>
    <source>
        <strain>ATCC 22028 / DSM 70294 / BCRC 21397 / CBS 2163 / NBRC 10782 / NRRL Y-8283 / UCD 57-17</strain>
    </source>
</reference>
<sequence length="659" mass="74343">MIKYNPAYLNLNERLSQIWLNKYTILFILAAFKLLFFSTSLRNALDVSKSYILSNCGTIDTMYSKTLNSTPHYIGVFGNYLINKALIQTVKTSLSTVSLLVYASEEILEFMVDFYLGTYECLLVAAIDGTVDTAVNATEKLIGFVNGSVGSIANDLDDGLNDLSKIINKAISAAEKVGSLFSDDDDDDDDDSSSSSKNIASVNLTIKALRNLYIPSSINDKLEKISDSTPTFDEVKNSTKNLIGIPFEKIRKEIKSINTTNIVGDPDVLYVPPINDNSNYQGICSANKNHITSFFYSMDHLLKVATIVCIVLLLIGAVVVLFPEFLEEFKLWKRLTQLREFYWYNKDLYPSSSELETINQEVKDPFNDKKNIIPDQFDVIAGYQTCFNPWHTRIVNFIEKIITYFNRSSFQNESNKRRRQWIVAYVASERALFILGIGMLAFFVSILQLIIITLLKRTFDNNSNMININSIANSSAVHSLKDDVSTWSNQVNLYIKQTEGNLNHQVFGWIEDSTESLNNTVTHMINGIDDTLADIFNGTLLYNPMKTVVSCVIENKLYTIEKSLTWIHNKANVTLPRINGDDINNLLSSSNNSTNATGSNNLATELFEDVIDDSKKIINKVIQTYHKSIIYEMIISLVFIGIWSSQIPIALVIARFKNF</sequence>
<comment type="function">
    <text evidence="1">Involved in cell fusion during mating by stabilizing the plasma membrane fusion event.</text>
</comment>
<comment type="subcellular location">
    <subcellularLocation>
        <location evidence="1">Cell membrane</location>
        <topology evidence="1">Multi-pass membrane protein</topology>
    </subcellularLocation>
</comment>
<comment type="similarity">
    <text evidence="3">Belongs to the PRM1 family.</text>
</comment>
<feature type="chain" id="PRO_0000337292" description="Plasma membrane fusion protein PRM1">
    <location>
        <begin position="1"/>
        <end position="659"/>
    </location>
</feature>
<feature type="topological domain" description="Extracellular" evidence="1">
    <location>
        <begin position="1"/>
        <end position="17"/>
    </location>
</feature>
<feature type="transmembrane region" description="Helical" evidence="2">
    <location>
        <begin position="18"/>
        <end position="38"/>
    </location>
</feature>
<feature type="topological domain" description="Cytoplasmic" evidence="1">
    <location>
        <begin position="39"/>
        <end position="106"/>
    </location>
</feature>
<feature type="transmembrane region" description="Helical" evidence="2">
    <location>
        <begin position="107"/>
        <end position="127"/>
    </location>
</feature>
<feature type="topological domain" description="Extracellular" evidence="1">
    <location>
        <begin position="128"/>
        <end position="305"/>
    </location>
</feature>
<feature type="transmembrane region" description="Helical" evidence="2">
    <location>
        <begin position="306"/>
        <end position="326"/>
    </location>
</feature>
<feature type="topological domain" description="Cytoplasmic" evidence="1">
    <location>
        <begin position="327"/>
        <end position="431"/>
    </location>
</feature>
<feature type="transmembrane region" description="Helical" evidence="2">
    <location>
        <begin position="432"/>
        <end position="452"/>
    </location>
</feature>
<feature type="topological domain" description="Extracellular" evidence="1">
    <location>
        <begin position="453"/>
        <end position="632"/>
    </location>
</feature>
<feature type="transmembrane region" description="Helical" evidence="2">
    <location>
        <begin position="633"/>
        <end position="653"/>
    </location>
</feature>
<feature type="topological domain" description="Cytoplasmic" evidence="1">
    <location>
        <begin position="654"/>
        <end position="659"/>
    </location>
</feature>
<feature type="glycosylation site" description="N-linked (GlcNAc...) asparagine" evidence="2">
    <location>
        <position position="136"/>
    </location>
</feature>
<feature type="glycosylation site" description="N-linked (GlcNAc...) asparagine" evidence="2">
    <location>
        <position position="146"/>
    </location>
</feature>
<feature type="glycosylation site" description="N-linked (GlcNAc...) asparagine" evidence="2">
    <location>
        <position position="203"/>
    </location>
</feature>
<feature type="glycosylation site" description="N-linked (GlcNAc...) asparagine" evidence="2">
    <location>
        <position position="237"/>
    </location>
</feature>
<feature type="glycosylation site" description="N-linked (GlcNAc...) asparagine" evidence="2">
    <location>
        <position position="258"/>
    </location>
</feature>
<feature type="glycosylation site" description="N-linked (GlcNAc...) asparagine" evidence="2">
    <location>
        <position position="461"/>
    </location>
</feature>
<feature type="glycosylation site" description="N-linked (GlcNAc...) asparagine" evidence="2">
    <location>
        <position position="473"/>
    </location>
</feature>
<feature type="glycosylation site" description="N-linked (GlcNAc...) asparagine" evidence="2">
    <location>
        <position position="518"/>
    </location>
</feature>
<feature type="glycosylation site" description="N-linked (GlcNAc...) asparagine" evidence="2">
    <location>
        <position position="537"/>
    </location>
</feature>
<feature type="glycosylation site" description="N-linked (GlcNAc...) asparagine" evidence="2">
    <location>
        <position position="572"/>
    </location>
</feature>
<feature type="glycosylation site" description="N-linked (GlcNAc...) asparagine" evidence="2">
    <location>
        <position position="591"/>
    </location>
</feature>
<feature type="glycosylation site" description="N-linked (GlcNAc...) asparagine" evidence="2">
    <location>
        <position position="592"/>
    </location>
</feature>
<feature type="glycosylation site" description="N-linked (GlcNAc...) asparagine" evidence="2">
    <location>
        <position position="595"/>
    </location>
</feature>
<proteinExistence type="inferred from homology"/>
<evidence type="ECO:0000250" key="1"/>
<evidence type="ECO:0000255" key="2"/>
<evidence type="ECO:0000305" key="3"/>